<proteinExistence type="inferred from homology"/>
<feature type="chain" id="PRO_1000137153" description="Regulatory protein RecX">
    <location>
        <begin position="1"/>
        <end position="270"/>
    </location>
</feature>
<protein>
    <recommendedName>
        <fullName evidence="1">Regulatory protein RecX</fullName>
    </recommendedName>
</protein>
<reference key="1">
    <citation type="submission" date="2008-10" db="EMBL/GenBank/DDBJ databases">
        <title>Genome sequence of Bacillus cereus B4264.</title>
        <authorList>
            <person name="Dodson R.J."/>
            <person name="Durkin A.S."/>
            <person name="Rosovitz M.J."/>
            <person name="Rasko D.A."/>
            <person name="Hoffmaster A."/>
            <person name="Ravel J."/>
            <person name="Sutton G."/>
        </authorList>
    </citation>
    <scope>NUCLEOTIDE SEQUENCE [LARGE SCALE GENOMIC DNA]</scope>
    <source>
        <strain>B4264</strain>
    </source>
</reference>
<sequence>MAVITKIEVQKRSKERFNIYIDKGQGEEYGFSVDQVILIKHGLQKGLEIDEIELGNILYNEEVQKAYLQAISYLSYQMRTKQEIEDFLRKKEVGQAIISEVVSKLLHDRYINDKEYAVLYTRTQSNVNRKGPTVIKRELLNKGVQDLIITHSLQEYPKEKQIENALFLIEKKKKSYQKHSFLQMKLKLDEMLVRKGYSREVIQICLEELKDEKDDEKQQEALHYHGNKYYEKYKKHDGWTFENKMKQALYRKGFSIDEIEIFLQMKREEE</sequence>
<name>RECX_BACC4</name>
<gene>
    <name evidence="1" type="primary">recX</name>
    <name type="ordered locus">BCB4264_A0519</name>
</gene>
<dbReference type="EMBL" id="CP001176">
    <property type="protein sequence ID" value="ACK61983.1"/>
    <property type="molecule type" value="Genomic_DNA"/>
</dbReference>
<dbReference type="RefSeq" id="WP_000268502.1">
    <property type="nucleotide sequence ID" value="NZ_VEHB01000009.1"/>
</dbReference>
<dbReference type="SMR" id="B7H9Q9"/>
<dbReference type="KEGG" id="bcb:BCB4264_A0519"/>
<dbReference type="HOGENOM" id="CLU_066607_4_0_9"/>
<dbReference type="Proteomes" id="UP000007096">
    <property type="component" value="Chromosome"/>
</dbReference>
<dbReference type="GO" id="GO:0005737">
    <property type="term" value="C:cytoplasm"/>
    <property type="evidence" value="ECO:0007669"/>
    <property type="project" value="UniProtKB-SubCell"/>
</dbReference>
<dbReference type="GO" id="GO:0006282">
    <property type="term" value="P:regulation of DNA repair"/>
    <property type="evidence" value="ECO:0007669"/>
    <property type="project" value="UniProtKB-UniRule"/>
</dbReference>
<dbReference type="Gene3D" id="1.10.10.10">
    <property type="entry name" value="Winged helix-like DNA-binding domain superfamily/Winged helix DNA-binding domain"/>
    <property type="match status" value="4"/>
</dbReference>
<dbReference type="HAMAP" id="MF_01114">
    <property type="entry name" value="RecX"/>
    <property type="match status" value="1"/>
</dbReference>
<dbReference type="InterPro" id="IPR053926">
    <property type="entry name" value="RecX_HTH_1st"/>
</dbReference>
<dbReference type="InterPro" id="IPR053924">
    <property type="entry name" value="RecX_HTH_2nd"/>
</dbReference>
<dbReference type="InterPro" id="IPR053925">
    <property type="entry name" value="RecX_HTH_3rd"/>
</dbReference>
<dbReference type="InterPro" id="IPR003783">
    <property type="entry name" value="Regulatory_RecX"/>
</dbReference>
<dbReference type="InterPro" id="IPR036388">
    <property type="entry name" value="WH-like_DNA-bd_sf"/>
</dbReference>
<dbReference type="NCBIfam" id="NF010733">
    <property type="entry name" value="PRK14135.1"/>
    <property type="match status" value="1"/>
</dbReference>
<dbReference type="PANTHER" id="PTHR33602">
    <property type="entry name" value="REGULATORY PROTEIN RECX FAMILY PROTEIN"/>
    <property type="match status" value="1"/>
</dbReference>
<dbReference type="PANTHER" id="PTHR33602:SF1">
    <property type="entry name" value="REGULATORY PROTEIN RECX FAMILY PROTEIN"/>
    <property type="match status" value="1"/>
</dbReference>
<dbReference type="Pfam" id="PF21982">
    <property type="entry name" value="RecX_HTH1"/>
    <property type="match status" value="1"/>
</dbReference>
<dbReference type="Pfam" id="PF02631">
    <property type="entry name" value="RecX_HTH2"/>
    <property type="match status" value="1"/>
</dbReference>
<dbReference type="Pfam" id="PF21981">
    <property type="entry name" value="RecX_HTH3"/>
    <property type="match status" value="2"/>
</dbReference>
<comment type="function">
    <text evidence="1">Modulates RecA activity.</text>
</comment>
<comment type="subcellular location">
    <subcellularLocation>
        <location evidence="1">Cytoplasm</location>
    </subcellularLocation>
</comment>
<comment type="similarity">
    <text evidence="1">Belongs to the RecX family.</text>
</comment>
<evidence type="ECO:0000255" key="1">
    <source>
        <dbReference type="HAMAP-Rule" id="MF_01114"/>
    </source>
</evidence>
<keyword id="KW-0963">Cytoplasm</keyword>
<accession>B7H9Q9</accession>
<organism>
    <name type="scientific">Bacillus cereus (strain B4264)</name>
    <dbReference type="NCBI Taxonomy" id="405532"/>
    <lineage>
        <taxon>Bacteria</taxon>
        <taxon>Bacillati</taxon>
        <taxon>Bacillota</taxon>
        <taxon>Bacilli</taxon>
        <taxon>Bacillales</taxon>
        <taxon>Bacillaceae</taxon>
        <taxon>Bacillus</taxon>
        <taxon>Bacillus cereus group</taxon>
    </lineage>
</organism>